<proteinExistence type="inferred from homology"/>
<dbReference type="EC" id="2.1.3.2" evidence="1"/>
<dbReference type="EMBL" id="CP001176">
    <property type="protein sequence ID" value="ACK62362.1"/>
    <property type="molecule type" value="Genomic_DNA"/>
</dbReference>
<dbReference type="RefSeq" id="WP_000018849.1">
    <property type="nucleotide sequence ID" value="NZ_VEHB01000002.1"/>
</dbReference>
<dbReference type="SMR" id="B7H6M5"/>
<dbReference type="GeneID" id="75087026"/>
<dbReference type="KEGG" id="bcb:BCB4264_A3987"/>
<dbReference type="HOGENOM" id="CLU_043846_2_1_9"/>
<dbReference type="UniPathway" id="UPA00070">
    <property type="reaction ID" value="UER00116"/>
</dbReference>
<dbReference type="Proteomes" id="UP000007096">
    <property type="component" value="Chromosome"/>
</dbReference>
<dbReference type="GO" id="GO:0005829">
    <property type="term" value="C:cytosol"/>
    <property type="evidence" value="ECO:0007669"/>
    <property type="project" value="TreeGrafter"/>
</dbReference>
<dbReference type="GO" id="GO:0016597">
    <property type="term" value="F:amino acid binding"/>
    <property type="evidence" value="ECO:0007669"/>
    <property type="project" value="InterPro"/>
</dbReference>
<dbReference type="GO" id="GO:0004070">
    <property type="term" value="F:aspartate carbamoyltransferase activity"/>
    <property type="evidence" value="ECO:0007669"/>
    <property type="project" value="UniProtKB-UniRule"/>
</dbReference>
<dbReference type="GO" id="GO:0006207">
    <property type="term" value="P:'de novo' pyrimidine nucleobase biosynthetic process"/>
    <property type="evidence" value="ECO:0007669"/>
    <property type="project" value="InterPro"/>
</dbReference>
<dbReference type="GO" id="GO:0044205">
    <property type="term" value="P:'de novo' UMP biosynthetic process"/>
    <property type="evidence" value="ECO:0007669"/>
    <property type="project" value="UniProtKB-UniRule"/>
</dbReference>
<dbReference type="GO" id="GO:0006520">
    <property type="term" value="P:amino acid metabolic process"/>
    <property type="evidence" value="ECO:0007669"/>
    <property type="project" value="InterPro"/>
</dbReference>
<dbReference type="FunFam" id="3.40.50.1370:FF:000001">
    <property type="entry name" value="Aspartate carbamoyltransferase"/>
    <property type="match status" value="1"/>
</dbReference>
<dbReference type="FunFam" id="3.40.50.1370:FF:000011">
    <property type="entry name" value="Aspartate carbamoyltransferase"/>
    <property type="match status" value="1"/>
</dbReference>
<dbReference type="Gene3D" id="3.40.50.1370">
    <property type="entry name" value="Aspartate/ornithine carbamoyltransferase"/>
    <property type="match status" value="2"/>
</dbReference>
<dbReference type="HAMAP" id="MF_00001">
    <property type="entry name" value="Asp_carb_tr"/>
    <property type="match status" value="1"/>
</dbReference>
<dbReference type="InterPro" id="IPR006132">
    <property type="entry name" value="Asp/Orn_carbamoyltranf_P-bd"/>
</dbReference>
<dbReference type="InterPro" id="IPR006130">
    <property type="entry name" value="Asp/Orn_carbamoylTrfase"/>
</dbReference>
<dbReference type="InterPro" id="IPR036901">
    <property type="entry name" value="Asp/Orn_carbamoylTrfase_sf"/>
</dbReference>
<dbReference type="InterPro" id="IPR002082">
    <property type="entry name" value="Asp_carbamoyltransf"/>
</dbReference>
<dbReference type="InterPro" id="IPR006131">
    <property type="entry name" value="Asp_carbamoyltransf_Asp/Orn-bd"/>
</dbReference>
<dbReference type="NCBIfam" id="TIGR00670">
    <property type="entry name" value="asp_carb_tr"/>
    <property type="match status" value="1"/>
</dbReference>
<dbReference type="NCBIfam" id="NF002032">
    <property type="entry name" value="PRK00856.1"/>
    <property type="match status" value="1"/>
</dbReference>
<dbReference type="PANTHER" id="PTHR45753:SF6">
    <property type="entry name" value="ASPARTATE CARBAMOYLTRANSFERASE"/>
    <property type="match status" value="1"/>
</dbReference>
<dbReference type="PANTHER" id="PTHR45753">
    <property type="entry name" value="ORNITHINE CARBAMOYLTRANSFERASE, MITOCHONDRIAL"/>
    <property type="match status" value="1"/>
</dbReference>
<dbReference type="Pfam" id="PF00185">
    <property type="entry name" value="OTCace"/>
    <property type="match status" value="1"/>
</dbReference>
<dbReference type="Pfam" id="PF02729">
    <property type="entry name" value="OTCace_N"/>
    <property type="match status" value="1"/>
</dbReference>
<dbReference type="PRINTS" id="PR00100">
    <property type="entry name" value="AOTCASE"/>
</dbReference>
<dbReference type="PRINTS" id="PR00101">
    <property type="entry name" value="ATCASE"/>
</dbReference>
<dbReference type="SUPFAM" id="SSF53671">
    <property type="entry name" value="Aspartate/ornithine carbamoyltransferase"/>
    <property type="match status" value="1"/>
</dbReference>
<dbReference type="PROSITE" id="PS00097">
    <property type="entry name" value="CARBAMOYLTRANSFERASE"/>
    <property type="match status" value="1"/>
</dbReference>
<sequence length="304" mass="34722">MSHLLTMSELSEVEISEILKDAEDFANGKESKTTEQTFVANLFFENSTRTRFSFEVAEKRLGLDVLNFSADASSVQKGETLYDTIRTLESIGTKAVVIRHEQDRYFDELKDQVNIPILNAGDGCGNHPTQCLLDLLTIKQEFGRFEGLKIAIVGDVRHSRVARSNAEALTKLGATIYFASPEEWKDEDNTFGTYKPLDELVPEVDVMMLLRVQHERHDHYETDIMKEYHEKHGLTVEREKRMKEGSIIMHPAPVNRDVEIASELVECERSRIFKQMENGVYVRMAVLKRALPNVLGGMKHELFV</sequence>
<organism>
    <name type="scientific">Bacillus cereus (strain B4264)</name>
    <dbReference type="NCBI Taxonomy" id="405532"/>
    <lineage>
        <taxon>Bacteria</taxon>
        <taxon>Bacillati</taxon>
        <taxon>Bacillota</taxon>
        <taxon>Bacilli</taxon>
        <taxon>Bacillales</taxon>
        <taxon>Bacillaceae</taxon>
        <taxon>Bacillus</taxon>
        <taxon>Bacillus cereus group</taxon>
    </lineage>
</organism>
<name>PYRB_BACC4</name>
<protein>
    <recommendedName>
        <fullName evidence="1">Aspartate carbamoyltransferase catalytic subunit</fullName>
        <ecNumber evidence="1">2.1.3.2</ecNumber>
    </recommendedName>
    <alternativeName>
        <fullName evidence="1">Aspartate transcarbamylase</fullName>
        <shortName evidence="1">ATCase</shortName>
    </alternativeName>
</protein>
<evidence type="ECO:0000255" key="1">
    <source>
        <dbReference type="HAMAP-Rule" id="MF_00001"/>
    </source>
</evidence>
<accession>B7H6M5</accession>
<gene>
    <name evidence="1" type="primary">pyrB</name>
    <name type="ordered locus">BCB4264_A3987</name>
</gene>
<reference key="1">
    <citation type="submission" date="2008-10" db="EMBL/GenBank/DDBJ databases">
        <title>Genome sequence of Bacillus cereus B4264.</title>
        <authorList>
            <person name="Dodson R.J."/>
            <person name="Durkin A.S."/>
            <person name="Rosovitz M.J."/>
            <person name="Rasko D.A."/>
            <person name="Hoffmaster A."/>
            <person name="Ravel J."/>
            <person name="Sutton G."/>
        </authorList>
    </citation>
    <scope>NUCLEOTIDE SEQUENCE [LARGE SCALE GENOMIC DNA]</scope>
    <source>
        <strain>B4264</strain>
    </source>
</reference>
<feature type="chain" id="PRO_1000191901" description="Aspartate carbamoyltransferase catalytic subunit">
    <location>
        <begin position="1"/>
        <end position="304"/>
    </location>
</feature>
<feature type="binding site" evidence="1">
    <location>
        <position position="49"/>
    </location>
    <ligand>
        <name>carbamoyl phosphate</name>
        <dbReference type="ChEBI" id="CHEBI:58228"/>
    </ligand>
</feature>
<feature type="binding site" evidence="1">
    <location>
        <position position="50"/>
    </location>
    <ligand>
        <name>carbamoyl phosphate</name>
        <dbReference type="ChEBI" id="CHEBI:58228"/>
    </ligand>
</feature>
<feature type="binding site" evidence="1">
    <location>
        <position position="77"/>
    </location>
    <ligand>
        <name>L-aspartate</name>
        <dbReference type="ChEBI" id="CHEBI:29991"/>
    </ligand>
</feature>
<feature type="binding site" evidence="1">
    <location>
        <position position="99"/>
    </location>
    <ligand>
        <name>carbamoyl phosphate</name>
        <dbReference type="ChEBI" id="CHEBI:58228"/>
    </ligand>
</feature>
<feature type="binding site" evidence="1">
    <location>
        <position position="127"/>
    </location>
    <ligand>
        <name>carbamoyl phosphate</name>
        <dbReference type="ChEBI" id="CHEBI:58228"/>
    </ligand>
</feature>
<feature type="binding site" evidence="1">
    <location>
        <position position="130"/>
    </location>
    <ligand>
        <name>carbamoyl phosphate</name>
        <dbReference type="ChEBI" id="CHEBI:58228"/>
    </ligand>
</feature>
<feature type="binding site" evidence="1">
    <location>
        <position position="160"/>
    </location>
    <ligand>
        <name>L-aspartate</name>
        <dbReference type="ChEBI" id="CHEBI:29991"/>
    </ligand>
</feature>
<feature type="binding site" evidence="1">
    <location>
        <position position="211"/>
    </location>
    <ligand>
        <name>L-aspartate</name>
        <dbReference type="ChEBI" id="CHEBI:29991"/>
    </ligand>
</feature>
<feature type="binding site" evidence="1">
    <location>
        <position position="252"/>
    </location>
    <ligand>
        <name>carbamoyl phosphate</name>
        <dbReference type="ChEBI" id="CHEBI:58228"/>
    </ligand>
</feature>
<feature type="binding site" evidence="1">
    <location>
        <position position="253"/>
    </location>
    <ligand>
        <name>carbamoyl phosphate</name>
        <dbReference type="ChEBI" id="CHEBI:58228"/>
    </ligand>
</feature>
<keyword id="KW-0665">Pyrimidine biosynthesis</keyword>
<keyword id="KW-0808">Transferase</keyword>
<comment type="function">
    <text evidence="1">Catalyzes the condensation of carbamoyl phosphate and aspartate to form carbamoyl aspartate and inorganic phosphate, the committed step in the de novo pyrimidine nucleotide biosynthesis pathway.</text>
</comment>
<comment type="catalytic activity">
    <reaction evidence="1">
        <text>carbamoyl phosphate + L-aspartate = N-carbamoyl-L-aspartate + phosphate + H(+)</text>
        <dbReference type="Rhea" id="RHEA:20013"/>
        <dbReference type="ChEBI" id="CHEBI:15378"/>
        <dbReference type="ChEBI" id="CHEBI:29991"/>
        <dbReference type="ChEBI" id="CHEBI:32814"/>
        <dbReference type="ChEBI" id="CHEBI:43474"/>
        <dbReference type="ChEBI" id="CHEBI:58228"/>
        <dbReference type="EC" id="2.1.3.2"/>
    </reaction>
</comment>
<comment type="pathway">
    <text evidence="1">Pyrimidine metabolism; UMP biosynthesis via de novo pathway; (S)-dihydroorotate from bicarbonate: step 2/3.</text>
</comment>
<comment type="subunit">
    <text evidence="1">Heterododecamer (2C3:3R2) of six catalytic PyrB chains organized as two trimers (C3), and six regulatory PyrI chains organized as three dimers (R2).</text>
</comment>
<comment type="similarity">
    <text evidence="1">Belongs to the aspartate/ornithine carbamoyltransferase superfamily. ATCase family.</text>
</comment>